<reference key="1">
    <citation type="journal article" date="1994" name="Science">
        <title>Complete nucleotide sequence of Saccharomyces cerevisiae chromosome VIII.</title>
        <authorList>
            <person name="Johnston M."/>
            <person name="Andrews S."/>
            <person name="Brinkman R."/>
            <person name="Cooper J."/>
            <person name="Ding H."/>
            <person name="Dover J."/>
            <person name="Du Z."/>
            <person name="Favello A."/>
            <person name="Fulton L."/>
            <person name="Gattung S."/>
            <person name="Geisel C."/>
            <person name="Kirsten J."/>
            <person name="Kucaba T."/>
            <person name="Hillier L.W."/>
            <person name="Jier M."/>
            <person name="Johnston L."/>
            <person name="Langston Y."/>
            <person name="Latreille P."/>
            <person name="Louis E.J."/>
            <person name="Macri C."/>
            <person name="Mardis E."/>
            <person name="Menezes S."/>
            <person name="Mouser L."/>
            <person name="Nhan M."/>
            <person name="Rifkin L."/>
            <person name="Riles L."/>
            <person name="St Peter H."/>
            <person name="Trevaskis E."/>
            <person name="Vaughan K."/>
            <person name="Vignati D."/>
            <person name="Wilcox L."/>
            <person name="Wohldman P."/>
            <person name="Waterston R."/>
            <person name="Wilson R."/>
            <person name="Vaudin M."/>
        </authorList>
    </citation>
    <scope>NUCLEOTIDE SEQUENCE [LARGE SCALE GENOMIC DNA]</scope>
    <source>
        <strain>ATCC 204508 / S288c</strain>
    </source>
</reference>
<reference key="2">
    <citation type="journal article" date="2014" name="G3 (Bethesda)">
        <title>The reference genome sequence of Saccharomyces cerevisiae: Then and now.</title>
        <authorList>
            <person name="Engel S.R."/>
            <person name="Dietrich F.S."/>
            <person name="Fisk D.G."/>
            <person name="Binkley G."/>
            <person name="Balakrishnan R."/>
            <person name="Costanzo M.C."/>
            <person name="Dwight S.S."/>
            <person name="Hitz B.C."/>
            <person name="Karra K."/>
            <person name="Nash R.S."/>
            <person name="Weng S."/>
            <person name="Wong E.D."/>
            <person name="Lloyd P."/>
            <person name="Skrzypek M.S."/>
            <person name="Miyasato S.R."/>
            <person name="Simison M."/>
            <person name="Cherry J.M."/>
        </authorList>
    </citation>
    <scope>GENOME REANNOTATION</scope>
    <source>
        <strain>ATCC 204508 / S288c</strain>
    </source>
</reference>
<reference key="3">
    <citation type="journal article" date="2003" name="Genome Res.">
        <title>Systematic discovery of new genes in the Saccharomyces cerevisiae genome.</title>
        <authorList>
            <person name="Kessler M.M."/>
            <person name="Zeng Q."/>
            <person name="Hogan S."/>
            <person name="Cook R."/>
            <person name="Morales A.J."/>
            <person name="Cottarel G."/>
        </authorList>
    </citation>
    <scope>GENOME REANNOTATION</scope>
</reference>
<protein>
    <recommendedName>
        <fullName>Uncharacterized protein YHR086W-A</fullName>
    </recommendedName>
</protein>
<organism>
    <name type="scientific">Saccharomyces cerevisiae (strain ATCC 204508 / S288c)</name>
    <name type="common">Baker's yeast</name>
    <dbReference type="NCBI Taxonomy" id="559292"/>
    <lineage>
        <taxon>Eukaryota</taxon>
        <taxon>Fungi</taxon>
        <taxon>Dikarya</taxon>
        <taxon>Ascomycota</taxon>
        <taxon>Saccharomycotina</taxon>
        <taxon>Saccharomycetes</taxon>
        <taxon>Saccharomycetales</taxon>
        <taxon>Saccharomycetaceae</taxon>
        <taxon>Saccharomyces</taxon>
    </lineage>
</organism>
<proteinExistence type="predicted"/>
<feature type="chain" id="PRO_0000245395" description="Uncharacterized protein YHR086W-A">
    <location>
        <begin position="1"/>
        <end position="53"/>
    </location>
</feature>
<name>YH086_YEAST</name>
<dbReference type="EMBL" id="U00060">
    <property type="status" value="NOT_ANNOTATED_CDS"/>
    <property type="molecule type" value="Genomic_DNA"/>
</dbReference>
<dbReference type="EMBL" id="BK006934">
    <property type="protein sequence ID" value="DAA06782.1"/>
    <property type="molecule type" value="Genomic_DNA"/>
</dbReference>
<dbReference type="RefSeq" id="NP_878089.1">
    <property type="nucleotide sequence ID" value="NM_001184553.1"/>
</dbReference>
<dbReference type="BioGRID" id="37071">
    <property type="interactions" value="24"/>
</dbReference>
<dbReference type="FunCoup" id="Q3E746">
    <property type="interactions" value="5"/>
</dbReference>
<dbReference type="STRING" id="4932.YHR086W-A"/>
<dbReference type="PaxDb" id="4932-YHR086W-A"/>
<dbReference type="EnsemblFungi" id="YHR086W-A_mRNA">
    <property type="protein sequence ID" value="YHR086W-A"/>
    <property type="gene ID" value="YHR086W-A"/>
</dbReference>
<dbReference type="GeneID" id="1466529"/>
<dbReference type="KEGG" id="sce:YHR086W-A"/>
<dbReference type="AGR" id="SGD:S000028552"/>
<dbReference type="SGD" id="S000028552">
    <property type="gene designation" value="YHR086W-A"/>
</dbReference>
<dbReference type="VEuPathDB" id="FungiDB:YHR086W-A"/>
<dbReference type="HOGENOM" id="CLU_3069999_0_0_1"/>
<dbReference type="InParanoid" id="Q3E746"/>
<dbReference type="OrthoDB" id="10268588at2759"/>
<dbReference type="BioCyc" id="YEAST:G3O-31267-MONOMER"/>
<dbReference type="BioGRID-ORCS" id="1466529">
    <property type="hits" value="0 hits in 10 CRISPR screens"/>
</dbReference>
<dbReference type="PRO" id="PR:Q3E746"/>
<dbReference type="Proteomes" id="UP000002311">
    <property type="component" value="Chromosome VIII"/>
</dbReference>
<dbReference type="RNAct" id="Q3E746">
    <property type="molecule type" value="protein"/>
</dbReference>
<accession>Q3E746</accession>
<accession>D3DL38</accession>
<sequence length="53" mass="5985">MRLSLYSCCLCIGARRIPTPCLFSYIFTPNLAHFHSPLRSSGFRPAGATRFYS</sequence>
<gene>
    <name type="ordered locus">YHR086W-A</name>
</gene>
<keyword id="KW-1185">Reference proteome</keyword>